<dbReference type="EC" id="4.2.1.1"/>
<dbReference type="EMBL" id="AE000511">
    <property type="protein sequence ID" value="AAD07077.1"/>
    <property type="molecule type" value="Genomic_DNA"/>
</dbReference>
<dbReference type="PIR" id="D64520">
    <property type="entry name" value="D64520"/>
</dbReference>
<dbReference type="RefSeq" id="NP_206806.1">
    <property type="nucleotide sequence ID" value="NC_000915.1"/>
</dbReference>
<dbReference type="RefSeq" id="WP_000642977.1">
    <property type="nucleotide sequence ID" value="NC_018939.1"/>
</dbReference>
<dbReference type="SMR" id="O24855"/>
<dbReference type="FunCoup" id="O24855">
    <property type="interactions" value="203"/>
</dbReference>
<dbReference type="STRING" id="85962.HP_0004"/>
<dbReference type="BindingDB" id="O24855"/>
<dbReference type="ChEMBL" id="CHEMBL4211"/>
<dbReference type="DrugCentral" id="O24855"/>
<dbReference type="PaxDb" id="85962-C694_00020"/>
<dbReference type="EnsemblBacteria" id="AAD07077">
    <property type="protein sequence ID" value="AAD07077"/>
    <property type="gene ID" value="HP_0004"/>
</dbReference>
<dbReference type="KEGG" id="heo:C694_00020"/>
<dbReference type="KEGG" id="hpy:HP_0004"/>
<dbReference type="PATRIC" id="fig|85962.47.peg.4"/>
<dbReference type="eggNOG" id="COG0288">
    <property type="taxonomic scope" value="Bacteria"/>
</dbReference>
<dbReference type="InParanoid" id="O24855"/>
<dbReference type="OrthoDB" id="9797527at2"/>
<dbReference type="PhylomeDB" id="O24855"/>
<dbReference type="BRENDA" id="4.2.1.1">
    <property type="organism ID" value="2604"/>
</dbReference>
<dbReference type="Proteomes" id="UP000000429">
    <property type="component" value="Chromosome"/>
</dbReference>
<dbReference type="GO" id="GO:0004089">
    <property type="term" value="F:carbonate dehydratase activity"/>
    <property type="evidence" value="ECO:0007669"/>
    <property type="project" value="UniProtKB-EC"/>
</dbReference>
<dbReference type="GO" id="GO:0008270">
    <property type="term" value="F:zinc ion binding"/>
    <property type="evidence" value="ECO:0007669"/>
    <property type="project" value="InterPro"/>
</dbReference>
<dbReference type="GO" id="GO:0015976">
    <property type="term" value="P:carbon utilization"/>
    <property type="evidence" value="ECO:0007669"/>
    <property type="project" value="InterPro"/>
</dbReference>
<dbReference type="CDD" id="cd00884">
    <property type="entry name" value="beta_CA_cladeB"/>
    <property type="match status" value="1"/>
</dbReference>
<dbReference type="FunFam" id="3.40.1050.10:FF:000016">
    <property type="entry name" value="Carbonic anhydrase"/>
    <property type="match status" value="1"/>
</dbReference>
<dbReference type="Gene3D" id="3.40.1050.10">
    <property type="entry name" value="Carbonic anhydrase"/>
    <property type="match status" value="1"/>
</dbReference>
<dbReference type="InterPro" id="IPR045066">
    <property type="entry name" value="Beta_CA_cladeB"/>
</dbReference>
<dbReference type="InterPro" id="IPR001765">
    <property type="entry name" value="Carbonic_anhydrase"/>
</dbReference>
<dbReference type="InterPro" id="IPR015892">
    <property type="entry name" value="Carbonic_anhydrase_CS"/>
</dbReference>
<dbReference type="InterPro" id="IPR036874">
    <property type="entry name" value="Carbonic_anhydrase_sf"/>
</dbReference>
<dbReference type="PANTHER" id="PTHR11002">
    <property type="entry name" value="CARBONIC ANHYDRASE"/>
    <property type="match status" value="1"/>
</dbReference>
<dbReference type="PANTHER" id="PTHR11002:SF76">
    <property type="entry name" value="CARBONIC ANHYDRASE"/>
    <property type="match status" value="1"/>
</dbReference>
<dbReference type="Pfam" id="PF00484">
    <property type="entry name" value="Pro_CA"/>
    <property type="match status" value="1"/>
</dbReference>
<dbReference type="SMART" id="SM00947">
    <property type="entry name" value="Pro_CA"/>
    <property type="match status" value="1"/>
</dbReference>
<dbReference type="SUPFAM" id="SSF53056">
    <property type="entry name" value="beta-carbonic anhydrase, cab"/>
    <property type="match status" value="1"/>
</dbReference>
<dbReference type="PROSITE" id="PS00705">
    <property type="entry name" value="PROK_CO2_ANHYDRASE_2"/>
    <property type="match status" value="1"/>
</dbReference>
<reference key="1">
    <citation type="journal article" date="1997" name="Nature">
        <title>The complete genome sequence of the gastric pathogen Helicobacter pylori.</title>
        <authorList>
            <person name="Tomb J.-F."/>
            <person name="White O."/>
            <person name="Kerlavage A.R."/>
            <person name="Clayton R.A."/>
            <person name="Sutton G.G."/>
            <person name="Fleischmann R.D."/>
            <person name="Ketchum K.A."/>
            <person name="Klenk H.-P."/>
            <person name="Gill S.R."/>
            <person name="Dougherty B.A."/>
            <person name="Nelson K.E."/>
            <person name="Quackenbush J."/>
            <person name="Zhou L."/>
            <person name="Kirkness E.F."/>
            <person name="Peterson S.N."/>
            <person name="Loftus B.J."/>
            <person name="Richardson D.L."/>
            <person name="Dodson R.J."/>
            <person name="Khalak H.G."/>
            <person name="Glodek A."/>
            <person name="McKenney K."/>
            <person name="FitzGerald L.M."/>
            <person name="Lee N."/>
            <person name="Adams M.D."/>
            <person name="Hickey E.K."/>
            <person name="Berg D.E."/>
            <person name="Gocayne J.D."/>
            <person name="Utterback T.R."/>
            <person name="Peterson J.D."/>
            <person name="Kelley J.M."/>
            <person name="Cotton M.D."/>
            <person name="Weidman J.F."/>
            <person name="Fujii C."/>
            <person name="Bowman C."/>
            <person name="Watthey L."/>
            <person name="Wallin E."/>
            <person name="Hayes W.S."/>
            <person name="Borodovsky M."/>
            <person name="Karp P.D."/>
            <person name="Smith H.O."/>
            <person name="Fraser C.M."/>
            <person name="Venter J.C."/>
        </authorList>
    </citation>
    <scope>NUCLEOTIDE SEQUENCE [LARGE SCALE GENOMIC DNA]</scope>
    <source>
        <strain>ATCC 700392 / 26695</strain>
    </source>
</reference>
<accession>O24855</accession>
<protein>
    <recommendedName>
        <fullName>Carbonic anhydrase</fullName>
        <ecNumber>4.2.1.1</ecNumber>
    </recommendedName>
    <alternativeName>
        <fullName>Carbonate dehydratase</fullName>
    </alternativeName>
</protein>
<gene>
    <name type="primary">cynT</name>
    <name type="ordered locus">HP_0004</name>
</gene>
<sequence>MKAFLGALEFQENEYEELKELYESLKTKQKPHTLFISCVDSRVVPNLITGTKPGELYVICNMGNVNPPKTSYKESLSTIASIEYAIAHVGVQNLIICGHSDCGACGSVHLIHDETTKAKTPYIANWIQFLEPVKEELKNHPQFSNHFAKRSWLTERLNARLQLNNLLSYDFIQEKASKNELKIFGWHYIIETGRIYNYNFESHFFEPIGETIKQRKSHENF</sequence>
<keyword id="KW-0456">Lyase</keyword>
<keyword id="KW-0479">Metal-binding</keyword>
<keyword id="KW-1185">Reference proteome</keyword>
<keyword id="KW-0862">Zinc</keyword>
<feature type="chain" id="PRO_0000077461" description="Carbonic anhydrase">
    <location>
        <begin position="1"/>
        <end position="221"/>
    </location>
</feature>
<feature type="binding site" evidence="1">
    <location>
        <position position="38"/>
    </location>
    <ligand>
        <name>Zn(2+)</name>
        <dbReference type="ChEBI" id="CHEBI:29105"/>
    </ligand>
</feature>
<feature type="binding site" evidence="1">
    <location>
        <position position="40"/>
    </location>
    <ligand>
        <name>Zn(2+)</name>
        <dbReference type="ChEBI" id="CHEBI:29105"/>
    </ligand>
</feature>
<feature type="binding site" evidence="1">
    <location>
        <position position="99"/>
    </location>
    <ligand>
        <name>Zn(2+)</name>
        <dbReference type="ChEBI" id="CHEBI:29105"/>
    </ligand>
</feature>
<feature type="binding site" evidence="1">
    <location>
        <position position="102"/>
    </location>
    <ligand>
        <name>Zn(2+)</name>
        <dbReference type="ChEBI" id="CHEBI:29105"/>
    </ligand>
</feature>
<comment type="catalytic activity">
    <reaction>
        <text>hydrogencarbonate + H(+) = CO2 + H2O</text>
        <dbReference type="Rhea" id="RHEA:10748"/>
        <dbReference type="ChEBI" id="CHEBI:15377"/>
        <dbReference type="ChEBI" id="CHEBI:15378"/>
        <dbReference type="ChEBI" id="CHEBI:16526"/>
        <dbReference type="ChEBI" id="CHEBI:17544"/>
        <dbReference type="EC" id="4.2.1.1"/>
    </reaction>
</comment>
<comment type="cofactor">
    <cofactor evidence="1">
        <name>Zn(2+)</name>
        <dbReference type="ChEBI" id="CHEBI:29105"/>
    </cofactor>
    <text evidence="1">Binds 1 zinc ion per subunit.</text>
</comment>
<comment type="similarity">
    <text evidence="2">Belongs to the beta-class carbonic anhydrase family.</text>
</comment>
<evidence type="ECO:0000250" key="1"/>
<evidence type="ECO:0000305" key="2"/>
<proteinExistence type="inferred from homology"/>
<name>CYNT_HELPY</name>
<organism>
    <name type="scientific">Helicobacter pylori (strain ATCC 700392 / 26695)</name>
    <name type="common">Campylobacter pylori</name>
    <dbReference type="NCBI Taxonomy" id="85962"/>
    <lineage>
        <taxon>Bacteria</taxon>
        <taxon>Pseudomonadati</taxon>
        <taxon>Campylobacterota</taxon>
        <taxon>Epsilonproteobacteria</taxon>
        <taxon>Campylobacterales</taxon>
        <taxon>Helicobacteraceae</taxon>
        <taxon>Helicobacter</taxon>
    </lineage>
</organism>